<organism>
    <name type="scientific">Aromatoleum aromaticum (strain DSM 19018 / LMG 30748 / EbN1)</name>
    <name type="common">Azoarcus sp. (strain EbN1)</name>
    <dbReference type="NCBI Taxonomy" id="76114"/>
    <lineage>
        <taxon>Bacteria</taxon>
        <taxon>Pseudomonadati</taxon>
        <taxon>Pseudomonadota</taxon>
        <taxon>Betaproteobacteria</taxon>
        <taxon>Rhodocyclales</taxon>
        <taxon>Rhodocyclaceae</taxon>
        <taxon>Aromatoleum</taxon>
    </lineage>
</organism>
<sequence>MIFVISPAKALDFETPPVTAAATQPDYLREAEELIGILRQKTPAEVAELMHLSDPLAALNVARYERWHRPFTPDNAKQALLAFNGDVYGGLDAPSLSEDDFAWAQQHLRILSGLYGMLRPLDLMQPYRLEMGTRLGNPRGANLYAYWGDTLAEALNRLLAAERDAGGSAVLVNLASQEYFKAAARAKLTAQVITPVFEDWKGGRYRIITFYAKRARGLMSRYAIRNRVEDVEGLKGFDAEGYGFAPDVSDAETLVFRRRAD</sequence>
<protein>
    <recommendedName>
        <fullName evidence="1">UPF0246 protein AZOSEA34360</fullName>
    </recommendedName>
</protein>
<keyword id="KW-1185">Reference proteome</keyword>
<accession>Q5NZF3</accession>
<dbReference type="EMBL" id="CR555306">
    <property type="protein sequence ID" value="CAI09561.1"/>
    <property type="molecule type" value="Genomic_DNA"/>
</dbReference>
<dbReference type="RefSeq" id="WP_011239221.1">
    <property type="nucleotide sequence ID" value="NC_006513.1"/>
</dbReference>
<dbReference type="SMR" id="Q5NZF3"/>
<dbReference type="STRING" id="76114.ebA6021"/>
<dbReference type="KEGG" id="eba:ebA6021"/>
<dbReference type="eggNOG" id="COG3022">
    <property type="taxonomic scope" value="Bacteria"/>
</dbReference>
<dbReference type="HOGENOM" id="CLU_061989_0_0_4"/>
<dbReference type="OrthoDB" id="9777133at2"/>
<dbReference type="Proteomes" id="UP000006552">
    <property type="component" value="Chromosome"/>
</dbReference>
<dbReference type="GO" id="GO:0005829">
    <property type="term" value="C:cytosol"/>
    <property type="evidence" value="ECO:0007669"/>
    <property type="project" value="TreeGrafter"/>
</dbReference>
<dbReference type="GO" id="GO:0033194">
    <property type="term" value="P:response to hydroperoxide"/>
    <property type="evidence" value="ECO:0007669"/>
    <property type="project" value="TreeGrafter"/>
</dbReference>
<dbReference type="HAMAP" id="MF_00652">
    <property type="entry name" value="UPF0246"/>
    <property type="match status" value="1"/>
</dbReference>
<dbReference type="InterPro" id="IPR005583">
    <property type="entry name" value="YaaA"/>
</dbReference>
<dbReference type="NCBIfam" id="NF002541">
    <property type="entry name" value="PRK02101.1-1"/>
    <property type="match status" value="1"/>
</dbReference>
<dbReference type="NCBIfam" id="NF002542">
    <property type="entry name" value="PRK02101.1-3"/>
    <property type="match status" value="1"/>
</dbReference>
<dbReference type="PANTHER" id="PTHR30283:SF4">
    <property type="entry name" value="PEROXIDE STRESS RESISTANCE PROTEIN YAAA"/>
    <property type="match status" value="1"/>
</dbReference>
<dbReference type="PANTHER" id="PTHR30283">
    <property type="entry name" value="PEROXIDE STRESS RESPONSE PROTEIN YAAA"/>
    <property type="match status" value="1"/>
</dbReference>
<dbReference type="Pfam" id="PF03883">
    <property type="entry name" value="H2O2_YaaD"/>
    <property type="match status" value="1"/>
</dbReference>
<feature type="chain" id="PRO_0000261996" description="UPF0246 protein AZOSEA34360">
    <location>
        <begin position="1"/>
        <end position="261"/>
    </location>
</feature>
<name>Y3436_AROAE</name>
<evidence type="ECO:0000255" key="1">
    <source>
        <dbReference type="HAMAP-Rule" id="MF_00652"/>
    </source>
</evidence>
<proteinExistence type="inferred from homology"/>
<reference key="1">
    <citation type="journal article" date="2005" name="Arch. Microbiol.">
        <title>The genome sequence of an anaerobic aromatic-degrading denitrifying bacterium, strain EbN1.</title>
        <authorList>
            <person name="Rabus R."/>
            <person name="Kube M."/>
            <person name="Heider J."/>
            <person name="Beck A."/>
            <person name="Heitmann K."/>
            <person name="Widdel F."/>
            <person name="Reinhardt R."/>
        </authorList>
    </citation>
    <scope>NUCLEOTIDE SEQUENCE [LARGE SCALE GENOMIC DNA]</scope>
    <source>
        <strain>DSM 19018 / LMG 30748 / EbN1</strain>
    </source>
</reference>
<gene>
    <name type="ordered locus">AZOSEA34360</name>
    <name type="ORF">ebA6021</name>
</gene>
<comment type="similarity">
    <text evidence="1">Belongs to the UPF0246 family.</text>
</comment>